<reference key="1">
    <citation type="journal article" date="2007" name="Genome Res.">
        <title>Reductive evolution and niche adaptation inferred from the genome of Mycobacterium ulcerans, the causative agent of Buruli ulcer.</title>
        <authorList>
            <person name="Stinear T.P."/>
            <person name="Seemann T."/>
            <person name="Pidot S."/>
            <person name="Frigui W."/>
            <person name="Reysset G."/>
            <person name="Garnier T."/>
            <person name="Meurice G."/>
            <person name="Simon D."/>
            <person name="Bouchier C."/>
            <person name="Ma L."/>
            <person name="Tichit M."/>
            <person name="Porter J.L."/>
            <person name="Ryan J."/>
            <person name="Johnson P.D.R."/>
            <person name="Davies J.K."/>
            <person name="Jenkin G.A."/>
            <person name="Small P.L.C."/>
            <person name="Jones L.M."/>
            <person name="Tekaia F."/>
            <person name="Laval F."/>
            <person name="Daffe M."/>
            <person name="Parkhill J."/>
            <person name="Cole S.T."/>
        </authorList>
    </citation>
    <scope>NUCLEOTIDE SEQUENCE [LARGE SCALE GENOMIC DNA]</scope>
    <source>
        <strain>Agy99</strain>
    </source>
</reference>
<feature type="chain" id="PRO_0000400144" description="D-inositol 3-phosphate glycosyltransferase">
    <location>
        <begin position="1"/>
        <end position="463"/>
    </location>
</feature>
<feature type="region of interest" description="Disordered" evidence="2">
    <location>
        <begin position="443"/>
        <end position="463"/>
    </location>
</feature>
<feature type="binding site" evidence="1">
    <location>
        <position position="40"/>
    </location>
    <ligand>
        <name>1D-myo-inositol 3-phosphate</name>
        <dbReference type="ChEBI" id="CHEBI:58401"/>
    </ligand>
</feature>
<feature type="binding site" evidence="1">
    <location>
        <begin position="46"/>
        <end position="47"/>
    </location>
    <ligand>
        <name>UDP-N-acetyl-alpha-D-glucosamine</name>
        <dbReference type="ChEBI" id="CHEBI:57705"/>
    </ligand>
</feature>
<feature type="binding site" evidence="1">
    <location>
        <begin position="51"/>
        <end position="56"/>
    </location>
    <ligand>
        <name>1D-myo-inositol 3-phosphate</name>
        <dbReference type="ChEBI" id="CHEBI:58401"/>
    </ligand>
</feature>
<feature type="binding site" evidence="1">
    <location>
        <position position="54"/>
    </location>
    <ligand>
        <name>UDP-N-acetyl-alpha-D-glucosamine</name>
        <dbReference type="ChEBI" id="CHEBI:57705"/>
    </ligand>
</feature>
<feature type="binding site" evidence="1">
    <location>
        <position position="109"/>
    </location>
    <ligand>
        <name>1D-myo-inositol 3-phosphate</name>
        <dbReference type="ChEBI" id="CHEBI:58401"/>
    </ligand>
</feature>
<feature type="binding site" evidence="1">
    <location>
        <position position="142"/>
    </location>
    <ligand>
        <name>1D-myo-inositol 3-phosphate</name>
        <dbReference type="ChEBI" id="CHEBI:58401"/>
    </ligand>
</feature>
<feature type="binding site" evidence="1">
    <location>
        <position position="166"/>
    </location>
    <ligand>
        <name>1D-myo-inositol 3-phosphate</name>
        <dbReference type="ChEBI" id="CHEBI:58401"/>
    </ligand>
</feature>
<feature type="binding site" evidence="1">
    <location>
        <position position="186"/>
    </location>
    <ligand>
        <name>1D-myo-inositol 3-phosphate</name>
        <dbReference type="ChEBI" id="CHEBI:58401"/>
    </ligand>
</feature>
<feature type="binding site" evidence="1">
    <location>
        <position position="260"/>
    </location>
    <ligand>
        <name>UDP-N-acetyl-alpha-D-glucosamine</name>
        <dbReference type="ChEBI" id="CHEBI:57705"/>
    </ligand>
</feature>
<feature type="binding site" evidence="1">
    <location>
        <position position="265"/>
    </location>
    <ligand>
        <name>UDP-N-acetyl-alpha-D-glucosamine</name>
        <dbReference type="ChEBI" id="CHEBI:57705"/>
    </ligand>
</feature>
<feature type="binding site" evidence="1">
    <location>
        <position position="318"/>
    </location>
    <ligand>
        <name>UDP-N-acetyl-alpha-D-glucosamine</name>
        <dbReference type="ChEBI" id="CHEBI:57705"/>
    </ligand>
</feature>
<feature type="binding site" evidence="1">
    <location>
        <position position="327"/>
    </location>
    <ligand>
        <name>Mg(2+)</name>
        <dbReference type="ChEBI" id="CHEBI:18420"/>
    </ligand>
</feature>
<feature type="binding site" evidence="1">
    <location>
        <position position="328"/>
    </location>
    <ligand>
        <name>Mg(2+)</name>
        <dbReference type="ChEBI" id="CHEBI:18420"/>
    </ligand>
</feature>
<feature type="binding site" evidence="1">
    <location>
        <position position="330"/>
    </location>
    <ligand>
        <name>Mg(2+)</name>
        <dbReference type="ChEBI" id="CHEBI:18420"/>
    </ligand>
</feature>
<feature type="binding site" evidence="1">
    <location>
        <position position="340"/>
    </location>
    <ligand>
        <name>UDP-N-acetyl-alpha-D-glucosamine</name>
        <dbReference type="ChEBI" id="CHEBI:57705"/>
    </ligand>
</feature>
<feature type="binding site" evidence="1">
    <location>
        <position position="348"/>
    </location>
    <ligand>
        <name>UDP-N-acetyl-alpha-D-glucosamine</name>
        <dbReference type="ChEBI" id="CHEBI:57705"/>
    </ligand>
</feature>
<feature type="binding site" evidence="1">
    <location>
        <position position="354"/>
    </location>
    <ligand>
        <name>Mg(2+)</name>
        <dbReference type="ChEBI" id="CHEBI:18420"/>
    </ligand>
</feature>
<protein>
    <recommendedName>
        <fullName>D-inositol 3-phosphate glycosyltransferase</fullName>
        <ecNumber evidence="1">2.4.1.250</ecNumber>
    </recommendedName>
    <alternativeName>
        <fullName evidence="1">N-acetylglucosamine-inositol-phosphate N-acetylglucosaminyltransferase</fullName>
        <shortName evidence="1">GlcNAc-Ins-P N-acetylglucosaminyltransferase</shortName>
    </alternativeName>
</protein>
<name>MSHA_MYCUA</name>
<gene>
    <name evidence="1" type="primary">mshA</name>
    <name type="ordered locus">MUL_4556</name>
</gene>
<dbReference type="EC" id="2.4.1.250" evidence="1"/>
<dbReference type="EMBL" id="CP000325">
    <property type="protein sequence ID" value="ABL06510.1"/>
    <property type="molecule type" value="Genomic_DNA"/>
</dbReference>
<dbReference type="SMR" id="A0PVZ1"/>
<dbReference type="CAZy" id="GT4">
    <property type="family name" value="Glycosyltransferase Family 4"/>
</dbReference>
<dbReference type="KEGG" id="mul:MUL_4556"/>
<dbReference type="eggNOG" id="COG0438">
    <property type="taxonomic scope" value="Bacteria"/>
</dbReference>
<dbReference type="HOGENOM" id="CLU_009583_2_3_11"/>
<dbReference type="Proteomes" id="UP000000765">
    <property type="component" value="Chromosome"/>
</dbReference>
<dbReference type="GO" id="GO:0008375">
    <property type="term" value="F:acetylglucosaminyltransferase activity"/>
    <property type="evidence" value="ECO:0007669"/>
    <property type="project" value="UniProtKB-UniRule"/>
</dbReference>
<dbReference type="GO" id="GO:0102710">
    <property type="term" value="F:D-inositol-3-phosphate glycosyltransferase activity"/>
    <property type="evidence" value="ECO:0007669"/>
    <property type="project" value="UniProtKB-EC"/>
</dbReference>
<dbReference type="GO" id="GO:0000287">
    <property type="term" value="F:magnesium ion binding"/>
    <property type="evidence" value="ECO:0007669"/>
    <property type="project" value="UniProtKB-UniRule"/>
</dbReference>
<dbReference type="GO" id="GO:0010125">
    <property type="term" value="P:mycothiol biosynthetic process"/>
    <property type="evidence" value="ECO:0007669"/>
    <property type="project" value="UniProtKB-UniRule"/>
</dbReference>
<dbReference type="CDD" id="cd03800">
    <property type="entry name" value="GT4_sucrose_synthase"/>
    <property type="match status" value="1"/>
</dbReference>
<dbReference type="FunFam" id="3.40.50.2000:FF:000123">
    <property type="entry name" value="D-inositol-3-phosphate glycosyltransferase"/>
    <property type="match status" value="1"/>
</dbReference>
<dbReference type="Gene3D" id="3.40.50.2000">
    <property type="entry name" value="Glycogen Phosphorylase B"/>
    <property type="match status" value="2"/>
</dbReference>
<dbReference type="HAMAP" id="MF_01695">
    <property type="entry name" value="MshA"/>
    <property type="match status" value="1"/>
</dbReference>
<dbReference type="InterPro" id="IPR001296">
    <property type="entry name" value="Glyco_trans_1"/>
</dbReference>
<dbReference type="InterPro" id="IPR028098">
    <property type="entry name" value="Glyco_trans_4-like_N"/>
</dbReference>
<dbReference type="InterPro" id="IPR017814">
    <property type="entry name" value="Mycothiol_biosynthesis_MshA"/>
</dbReference>
<dbReference type="NCBIfam" id="TIGR03449">
    <property type="entry name" value="mycothiol_MshA"/>
    <property type="match status" value="1"/>
</dbReference>
<dbReference type="PANTHER" id="PTHR12526:SF510">
    <property type="entry name" value="D-INOSITOL 3-PHOSPHATE GLYCOSYLTRANSFERASE"/>
    <property type="match status" value="1"/>
</dbReference>
<dbReference type="PANTHER" id="PTHR12526">
    <property type="entry name" value="GLYCOSYLTRANSFERASE"/>
    <property type="match status" value="1"/>
</dbReference>
<dbReference type="Pfam" id="PF13579">
    <property type="entry name" value="Glyco_trans_4_4"/>
    <property type="match status" value="1"/>
</dbReference>
<dbReference type="Pfam" id="PF00534">
    <property type="entry name" value="Glycos_transf_1"/>
    <property type="match status" value="1"/>
</dbReference>
<dbReference type="SUPFAM" id="SSF53756">
    <property type="entry name" value="UDP-Glycosyltransferase/glycogen phosphorylase"/>
    <property type="match status" value="1"/>
</dbReference>
<keyword id="KW-0328">Glycosyltransferase</keyword>
<keyword id="KW-0460">Magnesium</keyword>
<keyword id="KW-0479">Metal-binding</keyword>
<keyword id="KW-0808">Transferase</keyword>
<accession>A0PVZ1</accession>
<proteinExistence type="inferred from homology"/>
<organism>
    <name type="scientific">Mycobacterium ulcerans (strain Agy99)</name>
    <dbReference type="NCBI Taxonomy" id="362242"/>
    <lineage>
        <taxon>Bacteria</taxon>
        <taxon>Bacillati</taxon>
        <taxon>Actinomycetota</taxon>
        <taxon>Actinomycetes</taxon>
        <taxon>Mycobacteriales</taxon>
        <taxon>Mycobacteriaceae</taxon>
        <taxon>Mycobacterium</taxon>
        <taxon>Mycobacterium ulcerans group</taxon>
    </lineage>
</organism>
<sequence>MRAGAGAAGESCKDDGVRPDDVSRLTADAVVRRVALLAVHTSPLAQPGTGDAGGMNVYVLQSALHLAKRGIEVEIFTRATASADPPVVRVAPGVLVRNVVAGPFEGLDKYDLPTQLCAFAAGVLRAEAAHEPGHYDIVHSHYWLSGQVGWLARDRWAVPLVHTAHTLAAVKNAALANGDAPEPPLRTVGEQQVVDEADRLIVNTDDEAKQLISIHHADPARIDVVHPGVDLEVFRPGDRQQARTALGLRPEEKVVAFVGRIQPLKAPDIVLRAVAKLPGVRIIVAGGPSGSGLASPDGLAQLADELGIAERVTFLPPQSRTDLARVFHAVDLVAIPSYSESFGLVAVEAQACGTRVVAAAVGGLPVAVRDGVSGTLVSGHDVDQWAAAIDGLLRSNAGAQGALMSRAAAEHAATFSWENTTDALLASYRRAIGDFTAGRRRKVRDPVAARKPRRWTARRGVGA</sequence>
<comment type="function">
    <text evidence="1">Catalyzes the transfer of a N-acetyl-glucosamine moiety to 1D-myo-inositol 3-phosphate to produce 1D-myo-inositol 2-acetamido-2-deoxy-glucopyranoside 3-phosphate in the mycothiol biosynthesis pathway.</text>
</comment>
<comment type="catalytic activity">
    <reaction evidence="1">
        <text>1D-myo-inositol 3-phosphate + UDP-N-acetyl-alpha-D-glucosamine = 1D-myo-inositol 2-acetamido-2-deoxy-alpha-D-glucopyranoside 3-phosphate + UDP + H(+)</text>
        <dbReference type="Rhea" id="RHEA:26188"/>
        <dbReference type="ChEBI" id="CHEBI:15378"/>
        <dbReference type="ChEBI" id="CHEBI:57705"/>
        <dbReference type="ChEBI" id="CHEBI:58223"/>
        <dbReference type="ChEBI" id="CHEBI:58401"/>
        <dbReference type="ChEBI" id="CHEBI:58892"/>
        <dbReference type="EC" id="2.4.1.250"/>
    </reaction>
</comment>
<comment type="subunit">
    <text evidence="1">Homodimer.</text>
</comment>
<comment type="similarity">
    <text evidence="1">Belongs to the glycosyltransferase group 1 family. MshA subfamily.</text>
</comment>
<evidence type="ECO:0000255" key="1">
    <source>
        <dbReference type="HAMAP-Rule" id="MF_01695"/>
    </source>
</evidence>
<evidence type="ECO:0000256" key="2">
    <source>
        <dbReference type="SAM" id="MobiDB-lite"/>
    </source>
</evidence>